<protein>
    <recommendedName>
        <fullName evidence="1">Protein pelota homolog</fullName>
        <ecNumber evidence="1">3.1.-.-</ecNumber>
    </recommendedName>
</protein>
<name>PELO_METBU</name>
<sequence>MRVTKRDLKHNREGEISLTPETLDDLWHLKYIIEKGDLVFSLTKRKADNAADKLRPEKAEKKTVRLGVRVEDVEFHKFSNRLRVHGLIEHGMDAGFYHTLNIEDGTNLSITKYWKKDQLERVNEAEAASKRPKVILVAIEEGDADIGFVRHYGIEIYSHITQSSGKGEGTLREVFFSTILDQLTHAMSGTESVVVSGPGFTKDDFMKYASSKNSDLVAGILVEDTSSIGMSGFQEVLRRGAVDRIMEESRIARESSLMDSLLKEIALDGKVAYGMDEVKQAIDFGAVETLLVADEMLRLERESGNIDGLIQNVERSQGKMVVFSTEFEPGQRLHSLGGIAAILRFKV</sequence>
<organism>
    <name type="scientific">Methanococcoides burtonii (strain DSM 6242 / NBRC 107633 / OCM 468 / ACE-M)</name>
    <dbReference type="NCBI Taxonomy" id="259564"/>
    <lineage>
        <taxon>Archaea</taxon>
        <taxon>Methanobacteriati</taxon>
        <taxon>Methanobacteriota</taxon>
        <taxon>Stenosarchaea group</taxon>
        <taxon>Methanomicrobia</taxon>
        <taxon>Methanosarcinales</taxon>
        <taxon>Methanosarcinaceae</taxon>
        <taxon>Methanococcoides</taxon>
    </lineage>
</organism>
<reference key="1">
    <citation type="journal article" date="2009" name="ISME J.">
        <title>The genome sequence of the psychrophilic archaeon, Methanococcoides burtonii: the role of genome evolution in cold adaptation.</title>
        <authorList>
            <person name="Allen M.A."/>
            <person name="Lauro F.M."/>
            <person name="Williams T.J."/>
            <person name="Burg D."/>
            <person name="Siddiqui K.S."/>
            <person name="De Francisci D."/>
            <person name="Chong K.W."/>
            <person name="Pilak O."/>
            <person name="Chew H.H."/>
            <person name="De Maere M.Z."/>
            <person name="Ting L."/>
            <person name="Katrib M."/>
            <person name="Ng C."/>
            <person name="Sowers K.R."/>
            <person name="Galperin M.Y."/>
            <person name="Anderson I.J."/>
            <person name="Ivanova N."/>
            <person name="Dalin E."/>
            <person name="Martinez M."/>
            <person name="Lapidus A."/>
            <person name="Hauser L."/>
            <person name="Land M."/>
            <person name="Thomas T."/>
            <person name="Cavicchioli R."/>
        </authorList>
    </citation>
    <scope>NUCLEOTIDE SEQUENCE [LARGE SCALE GENOMIC DNA]</scope>
    <source>
        <strain>DSM 6242 / NBRC 107633 / OCM 468 / ACE-M</strain>
    </source>
</reference>
<accession>Q12W71</accession>
<proteinExistence type="inferred from homology"/>
<gene>
    <name evidence="1" type="primary">pelA</name>
    <name type="ordered locus">Mbur_1390</name>
</gene>
<comment type="function">
    <text evidence="1">May function in recognizing stalled ribosomes, interact with stem-loop structures in stalled mRNA molecules, and effect endonucleolytic cleavage of the mRNA. May play a role in the release non-functional ribosomes and degradation of damaged mRNAs. Has endoribonuclease activity.</text>
</comment>
<comment type="cofactor">
    <cofactor evidence="1">
        <name>a divalent metal cation</name>
        <dbReference type="ChEBI" id="CHEBI:60240"/>
    </cofactor>
</comment>
<comment type="subunit">
    <text evidence="1">Monomer.</text>
</comment>
<comment type="subcellular location">
    <subcellularLocation>
        <location evidence="1">Cytoplasm</location>
    </subcellularLocation>
</comment>
<comment type="domain">
    <text evidence="1">The N-terminal domain has the RNA-binding Sm fold. It harbors the endoribonuclease activity.</text>
</comment>
<comment type="similarity">
    <text evidence="1">Belongs to the eukaryotic release factor 1 family. Pelota subfamily.</text>
</comment>
<dbReference type="EC" id="3.1.-.-" evidence="1"/>
<dbReference type="EMBL" id="CP000300">
    <property type="protein sequence ID" value="ABE52305.1"/>
    <property type="molecule type" value="Genomic_DNA"/>
</dbReference>
<dbReference type="RefSeq" id="WP_011499450.1">
    <property type="nucleotide sequence ID" value="NC_007955.1"/>
</dbReference>
<dbReference type="SMR" id="Q12W71"/>
<dbReference type="STRING" id="259564.Mbur_1390"/>
<dbReference type="GeneID" id="3997079"/>
<dbReference type="KEGG" id="mbu:Mbur_1390"/>
<dbReference type="HOGENOM" id="CLU_023334_0_0_2"/>
<dbReference type="OrthoDB" id="31300at2157"/>
<dbReference type="Proteomes" id="UP000001979">
    <property type="component" value="Chromosome"/>
</dbReference>
<dbReference type="GO" id="GO:0005737">
    <property type="term" value="C:cytoplasm"/>
    <property type="evidence" value="ECO:0007669"/>
    <property type="project" value="UniProtKB-SubCell"/>
</dbReference>
<dbReference type="GO" id="GO:0004519">
    <property type="term" value="F:endonuclease activity"/>
    <property type="evidence" value="ECO:0007669"/>
    <property type="project" value="UniProtKB-UniRule"/>
</dbReference>
<dbReference type="GO" id="GO:0046872">
    <property type="term" value="F:metal ion binding"/>
    <property type="evidence" value="ECO:0007669"/>
    <property type="project" value="UniProtKB-UniRule"/>
</dbReference>
<dbReference type="GO" id="GO:0070651">
    <property type="term" value="P:nonfunctional rRNA decay"/>
    <property type="evidence" value="ECO:0007669"/>
    <property type="project" value="TreeGrafter"/>
</dbReference>
<dbReference type="GO" id="GO:0070966">
    <property type="term" value="P:nuclear-transcribed mRNA catabolic process, no-go decay"/>
    <property type="evidence" value="ECO:0007669"/>
    <property type="project" value="InterPro"/>
</dbReference>
<dbReference type="GO" id="GO:0070481">
    <property type="term" value="P:nuclear-transcribed mRNA catabolic process, non-stop decay"/>
    <property type="evidence" value="ECO:0007669"/>
    <property type="project" value="InterPro"/>
</dbReference>
<dbReference type="GO" id="GO:0032790">
    <property type="term" value="P:ribosome disassembly"/>
    <property type="evidence" value="ECO:0007669"/>
    <property type="project" value="TreeGrafter"/>
</dbReference>
<dbReference type="GO" id="GO:0071025">
    <property type="term" value="P:RNA surveillance"/>
    <property type="evidence" value="ECO:0007669"/>
    <property type="project" value="InterPro"/>
</dbReference>
<dbReference type="FunFam" id="2.30.30.870:FF:000002">
    <property type="entry name" value="Protein pelota homolog"/>
    <property type="match status" value="1"/>
</dbReference>
<dbReference type="Gene3D" id="3.30.1330.30">
    <property type="match status" value="1"/>
</dbReference>
<dbReference type="Gene3D" id="3.30.420.60">
    <property type="entry name" value="eRF1 domain 2"/>
    <property type="match status" value="1"/>
</dbReference>
<dbReference type="Gene3D" id="2.30.30.870">
    <property type="entry name" value="Pelota, domain A"/>
    <property type="match status" value="1"/>
</dbReference>
<dbReference type="HAMAP" id="MF_01853">
    <property type="entry name" value="PelO"/>
    <property type="match status" value="1"/>
</dbReference>
<dbReference type="InterPro" id="IPR042226">
    <property type="entry name" value="eFR1_2_sf"/>
</dbReference>
<dbReference type="InterPro" id="IPR005140">
    <property type="entry name" value="eRF1_1_Pelota"/>
</dbReference>
<dbReference type="InterPro" id="IPR005141">
    <property type="entry name" value="eRF1_2"/>
</dbReference>
<dbReference type="InterPro" id="IPR005142">
    <property type="entry name" value="eRF1_3"/>
</dbReference>
<dbReference type="InterPro" id="IPR038069">
    <property type="entry name" value="Pelota/DOM34_N"/>
</dbReference>
<dbReference type="InterPro" id="IPR023521">
    <property type="entry name" value="Pelota_arc"/>
</dbReference>
<dbReference type="InterPro" id="IPR029064">
    <property type="entry name" value="Ribosomal_eL30-like_sf"/>
</dbReference>
<dbReference type="InterPro" id="IPR004405">
    <property type="entry name" value="Transl-rel_pelota"/>
</dbReference>
<dbReference type="NCBIfam" id="TIGR00111">
    <property type="entry name" value="pelota"/>
    <property type="match status" value="1"/>
</dbReference>
<dbReference type="PANTHER" id="PTHR10853">
    <property type="entry name" value="PELOTA"/>
    <property type="match status" value="1"/>
</dbReference>
<dbReference type="PANTHER" id="PTHR10853:SF0">
    <property type="entry name" value="PROTEIN PELOTA HOMOLOG"/>
    <property type="match status" value="1"/>
</dbReference>
<dbReference type="Pfam" id="PF03463">
    <property type="entry name" value="eRF1_1"/>
    <property type="match status" value="1"/>
</dbReference>
<dbReference type="Pfam" id="PF03464">
    <property type="entry name" value="eRF1_2"/>
    <property type="match status" value="1"/>
</dbReference>
<dbReference type="Pfam" id="PF03465">
    <property type="entry name" value="eRF1_3"/>
    <property type="match status" value="1"/>
</dbReference>
<dbReference type="SMART" id="SM01194">
    <property type="entry name" value="eRF1_1"/>
    <property type="match status" value="1"/>
</dbReference>
<dbReference type="SUPFAM" id="SSF159065">
    <property type="entry name" value="Dom34/Pelota N-terminal domain-like"/>
    <property type="match status" value="1"/>
</dbReference>
<dbReference type="SUPFAM" id="SSF55315">
    <property type="entry name" value="L30e-like"/>
    <property type="match status" value="1"/>
</dbReference>
<dbReference type="SUPFAM" id="SSF53137">
    <property type="entry name" value="Translational machinery components"/>
    <property type="match status" value="1"/>
</dbReference>
<feature type="chain" id="PRO_0000361793" description="Protein pelota homolog">
    <location>
        <begin position="1"/>
        <end position="347"/>
    </location>
</feature>
<keyword id="KW-0963">Cytoplasm</keyword>
<keyword id="KW-0255">Endonuclease</keyword>
<keyword id="KW-0378">Hydrolase</keyword>
<keyword id="KW-0479">Metal-binding</keyword>
<keyword id="KW-0540">Nuclease</keyword>
<evidence type="ECO:0000255" key="1">
    <source>
        <dbReference type="HAMAP-Rule" id="MF_01853"/>
    </source>
</evidence>